<feature type="signal peptide" evidence="3">
    <location>
        <begin position="1"/>
        <end position="18"/>
    </location>
</feature>
<feature type="chain" id="PRO_0000035747" description="Transferrin">
    <location>
        <begin position="19"/>
        <end position="681"/>
    </location>
</feature>
<feature type="domain" description="Transferrin-like 1" evidence="2">
    <location>
        <begin position="23"/>
        <end position="364"/>
    </location>
</feature>
<feature type="domain" description="Transferrin-like 2" evidence="2">
    <location>
        <begin position="371"/>
        <end position="676"/>
    </location>
</feature>
<feature type="binding site" evidence="2">
    <location>
        <position position="75"/>
    </location>
    <ligand>
        <name>Fe(3+)</name>
        <dbReference type="ChEBI" id="CHEBI:29034"/>
    </ligand>
</feature>
<feature type="binding site" evidence="2">
    <location>
        <position position="108"/>
    </location>
    <ligand>
        <name>Fe(3+)</name>
        <dbReference type="ChEBI" id="CHEBI:29034"/>
    </ligand>
</feature>
<feature type="binding site" evidence="2">
    <location>
        <position position="134"/>
    </location>
    <ligand>
        <name>hydrogencarbonate</name>
        <dbReference type="ChEBI" id="CHEBI:17544"/>
        <label>1</label>
    </ligand>
</feature>
<feature type="binding site" evidence="2">
    <location>
        <position position="138"/>
    </location>
    <ligand>
        <name>hydrogencarbonate</name>
        <dbReference type="ChEBI" id="CHEBI:17544"/>
        <label>1</label>
    </ligand>
</feature>
<feature type="binding site" evidence="2">
    <location>
        <position position="140"/>
    </location>
    <ligand>
        <name>hydrogencarbonate</name>
        <dbReference type="ChEBI" id="CHEBI:17544"/>
        <label>1</label>
    </ligand>
</feature>
<feature type="binding site" evidence="2">
    <location>
        <position position="141"/>
    </location>
    <ligand>
        <name>hydrogencarbonate</name>
        <dbReference type="ChEBI" id="CHEBI:17544"/>
        <label>1</label>
    </ligand>
</feature>
<feature type="binding site" evidence="2">
    <location>
        <position position="222"/>
    </location>
    <ligand>
        <name>Fe(3+)</name>
        <dbReference type="ChEBI" id="CHEBI:29034"/>
    </ligand>
</feature>
<feature type="glycosylation site" description="N-linked (GlcNAc...) asparagine" evidence="1">
    <location>
        <position position="218"/>
    </location>
</feature>
<feature type="glycosylation site" description="N-linked (GlcNAc...) asparagine" evidence="1">
    <location>
        <position position="355"/>
    </location>
</feature>
<feature type="glycosylation site" description="N-linked (GlcNAc...) asparagine" evidence="1">
    <location>
        <position position="418"/>
    </location>
</feature>
<feature type="disulfide bond" evidence="2">
    <location>
        <begin position="26"/>
        <end position="60"/>
    </location>
</feature>
<feature type="disulfide bond" evidence="2">
    <location>
        <begin position="35"/>
        <end position="51"/>
    </location>
</feature>
<feature type="disulfide bond" evidence="2">
    <location>
        <begin position="132"/>
        <end position="228"/>
    </location>
</feature>
<feature type="disulfide bond" evidence="2">
    <location>
        <begin position="181"/>
        <end position="207"/>
    </location>
</feature>
<feature type="disulfide bond" evidence="2">
    <location>
        <begin position="204"/>
        <end position="213"/>
    </location>
</feature>
<feature type="disulfide bond" evidence="2">
    <location>
        <begin position="271"/>
        <end position="284"/>
    </location>
</feature>
<feature type="disulfide bond" evidence="2">
    <location>
        <begin position="374"/>
        <end position="411"/>
    </location>
</feature>
<feature type="disulfide bond" evidence="2">
    <location>
        <begin position="384"/>
        <end position="402"/>
    </location>
</feature>
<feature type="disulfide bond" evidence="2">
    <location>
        <begin position="478"/>
        <end position="551"/>
    </location>
</feature>
<feature type="disulfide bond" evidence="2">
    <location>
        <begin position="506"/>
        <end position="678"/>
    </location>
</feature>
<feature type="disulfide bond" evidence="2">
    <location>
        <begin position="579"/>
        <end position="596"/>
    </location>
</feature>
<feature type="strand" evidence="4">
    <location>
        <begin position="23"/>
        <end position="28"/>
    </location>
</feature>
<feature type="helix" evidence="4">
    <location>
        <begin position="29"/>
        <end position="31"/>
    </location>
</feature>
<feature type="helix" evidence="4">
    <location>
        <begin position="32"/>
        <end position="39"/>
    </location>
</feature>
<feature type="strand" evidence="4">
    <location>
        <begin position="49"/>
        <end position="56"/>
    </location>
</feature>
<feature type="helix" evidence="4">
    <location>
        <begin position="57"/>
        <end position="65"/>
    </location>
</feature>
<feature type="strand" evidence="4">
    <location>
        <begin position="68"/>
        <end position="74"/>
    </location>
</feature>
<feature type="helix" evidence="4">
    <location>
        <begin position="76"/>
        <end position="83"/>
    </location>
</feature>
<feature type="strand" evidence="4">
    <location>
        <begin position="90"/>
        <end position="97"/>
    </location>
</feature>
<feature type="strand" evidence="4">
    <location>
        <begin position="99"/>
        <end position="101"/>
    </location>
</feature>
<feature type="strand" evidence="4">
    <location>
        <begin position="105"/>
        <end position="115"/>
    </location>
</feature>
<feature type="helix" evidence="4">
    <location>
        <begin position="123"/>
        <end position="126"/>
    </location>
</feature>
<feature type="strand" evidence="4">
    <location>
        <begin position="130"/>
        <end position="132"/>
    </location>
</feature>
<feature type="turn" evidence="4">
    <location>
        <begin position="139"/>
        <end position="142"/>
    </location>
</feature>
<feature type="helix" evidence="4">
    <location>
        <begin position="143"/>
        <end position="149"/>
    </location>
</feature>
<feature type="helix" evidence="4">
    <location>
        <begin position="165"/>
        <end position="176"/>
    </location>
</feature>
<feature type="strand" evidence="4">
    <location>
        <begin position="177"/>
        <end position="181"/>
    </location>
</feature>
<feature type="strand" evidence="4">
    <location>
        <begin position="186"/>
        <end position="189"/>
    </location>
</feature>
<feature type="helix" evidence="4">
    <location>
        <begin position="190"/>
        <end position="199"/>
    </location>
</feature>
<feature type="helix" evidence="4">
    <location>
        <begin position="201"/>
        <end position="204"/>
    </location>
</feature>
<feature type="strand" evidence="4">
    <location>
        <begin position="207"/>
        <end position="209"/>
    </location>
</feature>
<feature type="turn" evidence="4">
    <location>
        <begin position="210"/>
        <end position="212"/>
    </location>
</feature>
<feature type="helix" evidence="4">
    <location>
        <begin position="221"/>
        <end position="231"/>
    </location>
</feature>
<feature type="strand" evidence="4">
    <location>
        <begin position="235"/>
        <end position="240"/>
    </location>
</feature>
<feature type="helix" evidence="4">
    <location>
        <begin position="241"/>
        <end position="247"/>
    </location>
</feature>
<feature type="helix" evidence="4">
    <location>
        <begin position="264"/>
        <end position="266"/>
    </location>
</feature>
<feature type="strand" evidence="4">
    <location>
        <begin position="267"/>
        <end position="270"/>
    </location>
</feature>
<feature type="strand" evidence="4">
    <location>
        <begin position="276"/>
        <end position="278"/>
    </location>
</feature>
<feature type="strand" evidence="4">
    <location>
        <begin position="286"/>
        <end position="289"/>
    </location>
</feature>
<feature type="strand" evidence="4">
    <location>
        <begin position="293"/>
        <end position="297"/>
    </location>
</feature>
<feature type="helix" evidence="4">
    <location>
        <begin position="298"/>
        <end position="300"/>
    </location>
</feature>
<feature type="strand" evidence="4">
    <location>
        <begin position="301"/>
        <end position="303"/>
    </location>
</feature>
<feature type="helix" evidence="4">
    <location>
        <begin position="304"/>
        <end position="318"/>
    </location>
</feature>
<feature type="turn" evidence="4">
    <location>
        <begin position="319"/>
        <end position="321"/>
    </location>
</feature>
<feature type="helix" evidence="4">
    <location>
        <begin position="324"/>
        <end position="328"/>
    </location>
</feature>
<feature type="strand" evidence="4">
    <location>
        <begin position="338"/>
        <end position="345"/>
    </location>
</feature>
<feature type="helix" evidence="4">
    <location>
        <begin position="347"/>
        <end position="352"/>
    </location>
</feature>
<feature type="turn" evidence="4">
    <location>
        <begin position="353"/>
        <end position="355"/>
    </location>
</feature>
<feature type="helix" evidence="4">
    <location>
        <begin position="356"/>
        <end position="360"/>
    </location>
</feature>
<feature type="strand" evidence="4">
    <location>
        <begin position="365"/>
        <end position="367"/>
    </location>
</feature>
<feature type="strand" evidence="4">
    <location>
        <begin position="370"/>
        <end position="377"/>
    </location>
</feature>
<feature type="helix" evidence="4">
    <location>
        <begin position="378"/>
        <end position="393"/>
    </location>
</feature>
<feature type="strand" evidence="4">
    <location>
        <begin position="397"/>
        <end position="404"/>
    </location>
</feature>
<feature type="helix" evidence="4">
    <location>
        <begin position="408"/>
        <end position="416"/>
    </location>
</feature>
<feature type="strand" evidence="4">
    <location>
        <begin position="421"/>
        <end position="425"/>
    </location>
</feature>
<feature type="helix" evidence="4">
    <location>
        <begin position="429"/>
        <end position="437"/>
    </location>
</feature>
<feature type="strand" evidence="4">
    <location>
        <begin position="440"/>
        <end position="447"/>
    </location>
</feature>
<feature type="turn" evidence="4">
    <location>
        <begin position="448"/>
        <end position="451"/>
    </location>
</feature>
<feature type="strand" evidence="4">
    <location>
        <begin position="455"/>
        <end position="461"/>
    </location>
</feature>
<feature type="helix" evidence="4">
    <location>
        <begin position="469"/>
        <end position="472"/>
    </location>
</feature>
<feature type="strand" evidence="4">
    <location>
        <begin position="475"/>
        <end position="480"/>
    </location>
</feature>
<feature type="turn" evidence="4">
    <location>
        <begin position="485"/>
        <end position="488"/>
    </location>
</feature>
<feature type="helix" evidence="4">
    <location>
        <begin position="489"/>
        <end position="497"/>
    </location>
</feature>
<feature type="strand" evidence="4">
    <location>
        <begin position="503"/>
        <end position="505"/>
    </location>
</feature>
<feature type="helix" evidence="4">
    <location>
        <begin position="506"/>
        <end position="513"/>
    </location>
</feature>
<feature type="turn" evidence="4">
    <location>
        <begin position="514"/>
        <end position="516"/>
    </location>
</feature>
<feature type="strand" evidence="4">
    <location>
        <begin position="517"/>
        <end position="519"/>
    </location>
</feature>
<feature type="helix" evidence="4">
    <location>
        <begin position="536"/>
        <end position="539"/>
    </location>
</feature>
<feature type="helix" evidence="4">
    <location>
        <begin position="548"/>
        <end position="553"/>
    </location>
</feature>
<feature type="strand" evidence="4">
    <location>
        <begin position="560"/>
        <end position="563"/>
    </location>
</feature>
<feature type="helix" evidence="4">
    <location>
        <begin position="564"/>
        <end position="569"/>
    </location>
</feature>
<feature type="turn" evidence="4">
    <location>
        <begin position="572"/>
        <end position="574"/>
    </location>
</feature>
<feature type="strand" evidence="4">
    <location>
        <begin position="575"/>
        <end position="578"/>
    </location>
</feature>
<feature type="helix" evidence="4">
    <location>
        <begin position="590"/>
        <end position="595"/>
    </location>
</feature>
<feature type="strand" evidence="4">
    <location>
        <begin position="596"/>
        <end position="600"/>
    </location>
</feature>
<feature type="strand" evidence="4">
    <location>
        <begin position="604"/>
        <end position="608"/>
    </location>
</feature>
<feature type="strand" evidence="4">
    <location>
        <begin position="610"/>
        <end position="613"/>
    </location>
</feature>
<feature type="helix" evidence="4">
    <location>
        <begin position="615"/>
        <end position="629"/>
    </location>
</feature>
<feature type="turn" evidence="4">
    <location>
        <begin position="633"/>
        <end position="635"/>
    </location>
</feature>
<feature type="strand" evidence="4">
    <location>
        <begin position="647"/>
        <end position="650"/>
    </location>
</feature>
<feature type="strand" evidence="4">
    <location>
        <begin position="656"/>
        <end position="659"/>
    </location>
</feature>
<feature type="helix" evidence="4">
    <location>
        <begin position="662"/>
        <end position="677"/>
    </location>
</feature>
<evidence type="ECO:0000255" key="1"/>
<evidence type="ECO:0000255" key="2">
    <source>
        <dbReference type="PROSITE-ProRule" id="PRU00741"/>
    </source>
</evidence>
<evidence type="ECO:0000269" key="3">
    <source>
    </source>
</evidence>
<evidence type="ECO:0007829" key="4">
    <source>
        <dbReference type="PDB" id="6WB6"/>
    </source>
</evidence>
<keyword id="KW-0002">3D-structure</keyword>
<keyword id="KW-0903">Direct protein sequencing</keyword>
<keyword id="KW-1015">Disulfide bond</keyword>
<keyword id="KW-0325">Glycoprotein</keyword>
<keyword id="KW-0406">Ion transport</keyword>
<keyword id="KW-0408">Iron</keyword>
<keyword id="KW-0410">Iron transport</keyword>
<keyword id="KW-0479">Metal-binding</keyword>
<keyword id="KW-0677">Repeat</keyword>
<keyword id="KW-0964">Secreted</keyword>
<keyword id="KW-0732">Signal</keyword>
<keyword id="KW-0813">Transport</keyword>
<organism>
    <name type="scientific">Manduca sexta</name>
    <name type="common">Tobacco hawkmoth</name>
    <name type="synonym">Tobacco hornworm</name>
    <dbReference type="NCBI Taxonomy" id="7130"/>
    <lineage>
        <taxon>Eukaryota</taxon>
        <taxon>Metazoa</taxon>
        <taxon>Ecdysozoa</taxon>
        <taxon>Arthropoda</taxon>
        <taxon>Hexapoda</taxon>
        <taxon>Insecta</taxon>
        <taxon>Pterygota</taxon>
        <taxon>Neoptera</taxon>
        <taxon>Endopterygota</taxon>
        <taxon>Lepidoptera</taxon>
        <taxon>Glossata</taxon>
        <taxon>Ditrysia</taxon>
        <taxon>Bombycoidea</taxon>
        <taxon>Sphingidae</taxon>
        <taxon>Sphinginae</taxon>
        <taxon>Sphingini</taxon>
        <taxon>Manduca</taxon>
    </lineage>
</organism>
<protein>
    <recommendedName>
        <fullName>Transferrin</fullName>
    </recommendedName>
</protein>
<comment type="function">
    <text>Transferrins are iron binding transport proteins which bind Fe(3+) ion in association with the binding of an anion, usually bicarbonate. This transferrin binds only one Fe(3+) ion per protein molecule.</text>
</comment>
<comment type="subcellular location">
    <subcellularLocation>
        <location>Secreted</location>
    </subcellularLocation>
</comment>
<comment type="similarity">
    <text evidence="2">Belongs to the transferrin family.</text>
</comment>
<accession>P22297</accession>
<sequence>MALKLLTLIALTCAAANAAKSSYKLCVPAAYMKDCEQMLEVPTKSKVALECVPARDRVECLSFVQQRQADFVPVDPEDMYVASKIPNQDFVVFQEYRTDEEPDAPFRYEAVIVVHKDLPINNLDQLKGLRSCHTGVNRNVGYKIPLTMLMKRAVFPKMNDHSISPKENELKALSTFFAKSCIVGKWSPDPKTNSAWKSQYSHLCSMCEHPERCDYPDNYSGYEGALRCLAHNNGEVAFTKVIFTRKFFGLPVGTTPASPSNENPEEFRYLCVDGSKAPITGKACSWAARPWQGLIGHNDVLAKLAPLREKVKQLADSGAADKPEWFTKVLGLSEKIHHVADNIPIKPIDYLNKANYTEVIERGHGAPELVVRLCVTSNVALSKCRAMSVFAFSRDIRPILDCVQENSEDACLKSVQDNGSDLASVDDMRVAAAAKKYNLHPVFHEVYGELKTPNYAVAVVKKGTAYNKIDDLRGKKSCHSSYSTFSGLHAPLFYLINKRAIQSDHCVKNLGEFFSGGSCLPGVDKPENNPSGDDVSKLKKQCGSDSSAWKCLEEDRGDVAFVSSADLSHFDANQYELLCLNRDAGGRDVLSSFATCNVAMAPSRTWVAAKDFLSDVSIAHTPLSLAQMLATRPDLFNIYGEFLKNNNVIFNNAAKGLATTEKLDFEKFKTIHDVISSCGLA</sequence>
<dbReference type="EMBL" id="M62802">
    <property type="protein sequence ID" value="AAA29338.1"/>
    <property type="molecule type" value="mRNA"/>
</dbReference>
<dbReference type="PIR" id="A36500">
    <property type="entry name" value="A36500"/>
</dbReference>
<dbReference type="PDB" id="6WB6">
    <property type="method" value="X-ray"/>
    <property type="resolution" value="2.05 A"/>
    <property type="chains" value="A/B=19-681"/>
</dbReference>
<dbReference type="PDBsum" id="6WB6"/>
<dbReference type="SMR" id="P22297"/>
<dbReference type="OrthoDB" id="5914301at2759"/>
<dbReference type="GO" id="GO:0005769">
    <property type="term" value="C:early endosome"/>
    <property type="evidence" value="ECO:0007669"/>
    <property type="project" value="TreeGrafter"/>
</dbReference>
<dbReference type="GO" id="GO:0005615">
    <property type="term" value="C:extracellular space"/>
    <property type="evidence" value="ECO:0007669"/>
    <property type="project" value="InterPro"/>
</dbReference>
<dbReference type="GO" id="GO:0005886">
    <property type="term" value="C:plasma membrane"/>
    <property type="evidence" value="ECO:0007669"/>
    <property type="project" value="TreeGrafter"/>
</dbReference>
<dbReference type="GO" id="GO:0055037">
    <property type="term" value="C:recycling endosome"/>
    <property type="evidence" value="ECO:0007669"/>
    <property type="project" value="TreeGrafter"/>
</dbReference>
<dbReference type="GO" id="GO:0046872">
    <property type="term" value="F:metal ion binding"/>
    <property type="evidence" value="ECO:0007669"/>
    <property type="project" value="UniProtKB-KW"/>
</dbReference>
<dbReference type="GO" id="GO:0006826">
    <property type="term" value="P:iron ion transport"/>
    <property type="evidence" value="ECO:0007669"/>
    <property type="project" value="UniProtKB-KW"/>
</dbReference>
<dbReference type="CDD" id="cd13529">
    <property type="entry name" value="PBP2_transferrin"/>
    <property type="match status" value="2"/>
</dbReference>
<dbReference type="Gene3D" id="3.40.190.10">
    <property type="entry name" value="Periplasmic binding protein-like II"/>
    <property type="match status" value="4"/>
</dbReference>
<dbReference type="InterPro" id="IPR016357">
    <property type="entry name" value="Transferrin"/>
</dbReference>
<dbReference type="InterPro" id="IPR001156">
    <property type="entry name" value="Transferrin-like_dom"/>
</dbReference>
<dbReference type="InterPro" id="IPR018195">
    <property type="entry name" value="Transferrin_Fe_BS"/>
</dbReference>
<dbReference type="PANTHER" id="PTHR11485">
    <property type="entry name" value="TRANSFERRIN"/>
    <property type="match status" value="1"/>
</dbReference>
<dbReference type="PANTHER" id="PTHR11485:SF57">
    <property type="entry name" value="TRANSFERRIN"/>
    <property type="match status" value="1"/>
</dbReference>
<dbReference type="Pfam" id="PF00405">
    <property type="entry name" value="Transferrin"/>
    <property type="match status" value="2"/>
</dbReference>
<dbReference type="PIRSF" id="PIRSF002549">
    <property type="entry name" value="Transferrin"/>
    <property type="match status" value="1"/>
</dbReference>
<dbReference type="PRINTS" id="PR00422">
    <property type="entry name" value="TRANSFERRIN"/>
</dbReference>
<dbReference type="SMART" id="SM00094">
    <property type="entry name" value="TR_FER"/>
    <property type="match status" value="2"/>
</dbReference>
<dbReference type="SUPFAM" id="SSF53850">
    <property type="entry name" value="Periplasmic binding protein-like II"/>
    <property type="match status" value="2"/>
</dbReference>
<dbReference type="PROSITE" id="PS00205">
    <property type="entry name" value="TRANSFERRIN_LIKE_1"/>
    <property type="match status" value="2"/>
</dbReference>
<dbReference type="PROSITE" id="PS00206">
    <property type="entry name" value="TRANSFERRIN_LIKE_2"/>
    <property type="match status" value="1"/>
</dbReference>
<dbReference type="PROSITE" id="PS00207">
    <property type="entry name" value="TRANSFERRIN_LIKE_3"/>
    <property type="match status" value="2"/>
</dbReference>
<dbReference type="PROSITE" id="PS51408">
    <property type="entry name" value="TRANSFERRIN_LIKE_4"/>
    <property type="match status" value="2"/>
</dbReference>
<name>TRF_MANSE</name>
<reference key="1">
    <citation type="journal article" date="1990" name="J. Biol. Chem.">
        <title>Isolation and molecular cloning of transferrin from the tobacco hornworm, Manduca sexta. Sequence similarity to the vertebrate transferrins.</title>
        <authorList>
            <person name="Bartfeld N.S."/>
            <person name="Law J.H."/>
        </authorList>
    </citation>
    <scope>NUCLEOTIDE SEQUENCE [MRNA]</scope>
    <scope>PROTEIN SEQUENCE OF 19-52</scope>
    <source>
        <tissue>Fat body</tissue>
    </source>
</reference>
<proteinExistence type="evidence at protein level"/>